<proteinExistence type="evidence at protein level"/>
<dbReference type="PDB" id="2MJ0">
    <property type="method" value="NMR"/>
    <property type="chains" value="A=22-86"/>
</dbReference>
<dbReference type="PDBsum" id="2MJ0"/>
<dbReference type="BMRB" id="P82935"/>
<dbReference type="SMR" id="P82935"/>
<dbReference type="EvolutionaryTrace" id="P82935"/>
<dbReference type="GO" id="GO:0005576">
    <property type="term" value="C:extracellular region"/>
    <property type="evidence" value="ECO:0007669"/>
    <property type="project" value="UniProtKB-SubCell"/>
</dbReference>
<dbReference type="GO" id="GO:0090729">
    <property type="term" value="F:toxin activity"/>
    <property type="evidence" value="ECO:0007669"/>
    <property type="project" value="UniProtKB-KW"/>
</dbReference>
<dbReference type="CDD" id="cd00206">
    <property type="entry name" value="TFP_snake_toxin"/>
    <property type="match status" value="1"/>
</dbReference>
<dbReference type="FunFam" id="2.10.60.10:FF:000024">
    <property type="entry name" value="Cytotoxin 1"/>
    <property type="match status" value="1"/>
</dbReference>
<dbReference type="Gene3D" id="2.10.60.10">
    <property type="entry name" value="CD59"/>
    <property type="match status" value="1"/>
</dbReference>
<dbReference type="InterPro" id="IPR003571">
    <property type="entry name" value="Snake_3FTx"/>
</dbReference>
<dbReference type="InterPro" id="IPR045860">
    <property type="entry name" value="Snake_toxin-like_sf"/>
</dbReference>
<dbReference type="InterPro" id="IPR018354">
    <property type="entry name" value="Snake_toxin_con_site"/>
</dbReference>
<dbReference type="InterPro" id="IPR054131">
    <property type="entry name" value="Toxin_cobra-type"/>
</dbReference>
<dbReference type="Pfam" id="PF21947">
    <property type="entry name" value="Toxin_cobra-type"/>
    <property type="match status" value="1"/>
</dbReference>
<dbReference type="SUPFAM" id="SSF57302">
    <property type="entry name" value="Snake toxin-like"/>
    <property type="match status" value="1"/>
</dbReference>
<dbReference type="PROSITE" id="PS00272">
    <property type="entry name" value="SNAKE_TOXIN"/>
    <property type="match status" value="1"/>
</dbReference>
<keyword id="KW-0002">3D-structure</keyword>
<keyword id="KW-0123">Cardiotoxin</keyword>
<keyword id="KW-0903">Direct protein sequencing</keyword>
<keyword id="KW-1015">Disulfide bond</keyword>
<keyword id="KW-1214">G-protein coupled acetylcholine receptor impairing toxin</keyword>
<keyword id="KW-1213">G-protein coupled receptor impairing toxin</keyword>
<keyword id="KW-0528">Neurotoxin</keyword>
<keyword id="KW-0629">Postsynaptic neurotoxin</keyword>
<keyword id="KW-0964">Secreted</keyword>
<keyword id="KW-0732">Signal</keyword>
<keyword id="KW-0800">Toxin</keyword>
<sequence>MKTLLLTLVVVTIVCLDLGYTLTCLNCPEMFCGKFQICRNGEKICFKKLHQRRPLSWRYIRGCADTCPVGKPYEMIECCSTDKCNR</sequence>
<name>3NO2_NAJKA</name>
<accession>P82935</accession>
<evidence type="ECO:0000269" key="1">
    <source>
    </source>
</evidence>
<evidence type="ECO:0000269" key="2">
    <source>
    </source>
</evidence>
<evidence type="ECO:0000269" key="3">
    <source>
    </source>
</evidence>
<evidence type="ECO:0000269" key="4">
    <source>
    </source>
</evidence>
<evidence type="ECO:0000269" key="5">
    <source>
    </source>
</evidence>
<evidence type="ECO:0000269" key="6">
    <source>
    </source>
</evidence>
<evidence type="ECO:0000269" key="7">
    <source>
    </source>
</evidence>
<evidence type="ECO:0000269" key="8">
    <source>
    </source>
</evidence>
<evidence type="ECO:0000303" key="9">
    <source>
    </source>
</evidence>
<evidence type="ECO:0000303" key="10">
    <source>
    </source>
</evidence>
<evidence type="ECO:0000303" key="11">
    <source>
    </source>
</evidence>
<evidence type="ECO:0000303" key="12">
    <source>
    </source>
</evidence>
<evidence type="ECO:0000305" key="13"/>
<evidence type="ECO:0000305" key="14">
    <source>
    </source>
</evidence>
<evidence type="ECO:0000312" key="15">
    <source>
        <dbReference type="PDB" id="2MJ0"/>
    </source>
</evidence>
<evidence type="ECO:0007829" key="16">
    <source>
        <dbReference type="PDB" id="2MJ0"/>
    </source>
</evidence>
<feature type="signal peptide" evidence="1">
    <location>
        <begin position="1"/>
        <end position="21"/>
    </location>
</feature>
<feature type="chain" id="PRO_0000093632" description="Tryptophan-containing weak neurotoxin" evidence="1">
    <location>
        <begin position="22"/>
        <end position="86"/>
    </location>
</feature>
<feature type="site" description="Important for interaction with human M1/CHRM1 and M3/CHRM3 mAChR, and muscle (Torpedo) and neuronal (alpha-7/CHRNA7) nAChR" evidence="7 8">
    <location>
        <position position="52"/>
    </location>
</feature>
<feature type="site" description="Important for interaction with human M1/CHRM1 and M3/CHRM3 mAChR, and muscle (Torpedo) and neuronal (alpha-7/CHRNA7) nAChR" evidence="7 8">
    <location>
        <position position="53"/>
    </location>
</feature>
<feature type="site" description="Important for interaction with human M1/CHRM1 and M3/CHRM3 mAChR, and only weakly for muscle (Torpedo) nAChR" evidence="7 8">
    <location>
        <position position="58"/>
    </location>
</feature>
<feature type="disulfide bond" evidence="7 15">
    <location>
        <begin position="24"/>
        <end position="45"/>
    </location>
</feature>
<feature type="disulfide bond" evidence="7 15">
    <location>
        <begin position="27"/>
        <end position="32"/>
    </location>
</feature>
<feature type="disulfide bond" evidence="7 15">
    <location>
        <begin position="38"/>
        <end position="63"/>
    </location>
</feature>
<feature type="disulfide bond" evidence="7 15">
    <location>
        <begin position="67"/>
        <end position="78"/>
    </location>
</feature>
<feature type="disulfide bond" evidence="7 15">
    <location>
        <begin position="79"/>
        <end position="84"/>
    </location>
</feature>
<feature type="mutagenesis site" description="About 3-fold increase in inhibition potency toward both muscle (Torpedo) and neuronal (alpha-7/CHRNA7) nAChR; when associated with S-32." evidence="8">
    <original>C</original>
    <variation>S</variation>
    <location>
        <position position="27"/>
    </location>
</feature>
<feature type="mutagenesis site" description="No change in inhibition potency toward both muscle (Torpedo) and neuronal (alpha-7/CHRNA7) nAChR." evidence="8">
    <original>P</original>
    <variation>A</variation>
    <location>
        <position position="28"/>
    </location>
</feature>
<feature type="mutagenesis site" description="About 3-fold increase in inhibition potency toward both muscle (Torpedo) and neuronal (alpha-7/CHRNA7) nAChR; when associated with S-27." evidence="8">
    <original>C</original>
    <variation>S</variation>
    <location>
        <position position="32"/>
    </location>
</feature>
<feature type="mutagenesis site" description="About 3.5-fold decrease in inhibition potency toward both muscle (Torpedo) and neuronal (alpha-7/CHRNA7) nAChR. About 4-fold decrease in inhibition potency toward muscle (Torpedo) nAChR and complete loss of inhibition potency toward neuronal (alpha-7/CHRNA7) nAChR; when associated with A-53." evidence="8">
    <original>R</original>
    <variation>A</variation>
    <location>
        <position position="52"/>
    </location>
</feature>
<feature type="mutagenesis site" description="About 3-fold decrease in inhibition potency toward muscle (Torpedo) nAChR and 5-fold decrease in inhibition potency toward neuronal (alpha-7/CHRNA7) nAChR. About 4-fold decrease in inhibition potency toward muscle (Torpedo) nAChR and complete loss of inhibition potency toward neuronal (alpha-7/CHRNA7) nAChR; when associated with A-52." evidence="8">
    <original>R</original>
    <variation>A</variation>
    <location>
        <position position="53"/>
    </location>
</feature>
<feature type="mutagenesis site" description="Weak decrease in inhibition potency toward muscle (Torpedo) and neuronal (alpha-7/CHRNA7) nAChR." evidence="8">
    <original>P</original>
    <variation>A</variation>
    <location>
        <position position="54"/>
    </location>
</feature>
<feature type="mutagenesis site" description="About 2.5-fold decrease in inhibition potency toward muscle (Torpedo) nAChR and no change in inhibition potency of neuronal (alpha-7/CHRNA7) nAChR." evidence="8">
    <original>W</original>
    <variation>A</variation>
    <location>
        <position position="57"/>
    </location>
</feature>
<feature type="mutagenesis site" description="Weak increase in inhibition potency toward both muscle (Torpedo) and neuronal (alpha-7/CHRNA7) nAChR." evidence="8">
    <original>R</original>
    <variation>A</variation>
    <location>
        <position position="58"/>
    </location>
</feature>
<feature type="strand" evidence="16">
    <location>
        <begin position="22"/>
        <end position="25"/>
    </location>
</feature>
<feature type="strand" evidence="16">
    <location>
        <begin position="28"/>
        <end position="31"/>
    </location>
</feature>
<feature type="strand" evidence="16">
    <location>
        <begin position="35"/>
        <end position="38"/>
    </location>
</feature>
<feature type="strand" evidence="16">
    <location>
        <begin position="44"/>
        <end position="50"/>
    </location>
</feature>
<feature type="helix" evidence="16">
    <location>
        <begin position="55"/>
        <end position="57"/>
    </location>
</feature>
<feature type="strand" evidence="16">
    <location>
        <begin position="59"/>
        <end position="66"/>
    </location>
</feature>
<feature type="strand" evidence="16">
    <location>
        <begin position="77"/>
        <end position="79"/>
    </location>
</feature>
<feature type="turn" evidence="16">
    <location>
        <begin position="82"/>
        <end position="85"/>
    </location>
</feature>
<comment type="function">
    <text evidence="2 3 4 5 6 8">Neurotoxin that irreversibly inhibits nicotinic acetylcholine receptors (nAChR) and allosterically interacts with muscarinic acetylcholine receptors (mAChR) (PubMed:11279130, PubMed:19682302). The loop II is involved in the interaction of this toxin with nAChR and mAChR (PubMed:26242733, PubMed:27343701). On nAChR, it acts as a competitive antagonist (muscle-type and alpha-7/CHRNA7) with IC(50) values in the micromolar range (PubMed:11279130, PubMed:27343701). On mAChR, in presence of ACh, it partially inhibits the effect of acetylcholine (ACh) (allosteric antagonist), whereas in the absence of ACh, it activates the receptor (allosteric agonist) (PubMed:19682302). It also shows a very weak inhibition of GABA(A) receptor composed of alpha-1-beta-3-gamma-2 (GABRA1 and GABRB3 and GABRG2) subunits (10 uM inhibit 31% current) (PubMed:26221036). In vivo, is nonlethal to mice at concentrations up to 20 mg/kg, but exerts a myorelaxant effect, induces a dose-dependent decrease in blood pressure and an increase in heart rate in mice and rats (PubMed:15581687, PubMed:17371532).</text>
</comment>
<comment type="subunit">
    <text evidence="7">Monomer in solution.</text>
</comment>
<comment type="subcellular location">
    <subcellularLocation>
        <location evidence="1">Secreted</location>
    </subcellularLocation>
</comment>
<comment type="tissue specificity">
    <text evidence="14">Expressed by the venom gland.</text>
</comment>
<comment type="PTM">
    <text evidence="8">The disulfide bond Cys-27-Cys-32 is probably not needed for efficient interaction of the toxin with the target receptor (Torpedo muscle or alpha-7/CHRNA7 nAChR).</text>
</comment>
<comment type="mass spectrometry"/>
<comment type="mass spectrometry">
    <text>Average mass.</text>
</comment>
<comment type="miscellaneous">
    <text evidence="7">Exists in two form, due to cis-trans isomeriation of the peptide bond 53-Arg-Pro-54.</text>
</comment>
<comment type="similarity">
    <text evidence="13">Belongs to the three-finger toxin family. Ancestral subfamily. Orphan group II sub-subfamily.</text>
</comment>
<reference key="1">
    <citation type="journal article" date="2003" name="IUBMB Life">
        <title>Direct cloning of a target gene from a pool of homologous sequences: complete cDNA sequence of a weak neurotoxin from cobra Naja kaouthia.</title>
        <authorList>
            <person name="Oustitch T.L."/>
            <person name="Peters L.E."/>
            <person name="Utkin Y.N."/>
            <person name="Tsetlin V.I."/>
        </authorList>
    </citation>
    <scope>NUCLEOTIDE SEQUENCE [MRNA]</scope>
</reference>
<reference key="2">
    <citation type="journal article" date="2001" name="Toxicon">
        <title>First tryptophan-containing weak neurotoxin from cobra venom.</title>
        <authorList>
            <person name="Utkin Y.N."/>
            <person name="Kukhtina V.V."/>
            <person name="Maslennikov I.V."/>
            <person name="Eletsky A.V."/>
            <person name="Starkov V.G."/>
            <person name="Weise C."/>
            <person name="Franke P."/>
            <person name="Hucho F."/>
            <person name="Tsetlin V.I."/>
        </authorList>
    </citation>
    <scope>PROTEIN SEQUENCE OF 22-86</scope>
    <scope>MASS SPECTROMETRY</scope>
    <scope>SUBCELLULAR LOCATION</scope>
    <source>
        <tissue>Venom</tissue>
    </source>
</reference>
<reference key="3">
    <citation type="journal article" date="2009" name="Russ. J. Bioorg. Chem.">
        <title>New weak toxins from the cobra venom.</title>
        <authorList>
            <person name="Starkov V.G."/>
            <person name="Polyak Y.L."/>
            <person name="Vulfius E.A."/>
            <person name="Kryukova E.V."/>
            <person name="Tsetlin V.I."/>
            <person name="Utkin Y.N."/>
        </authorList>
    </citation>
    <scope>PROTEIN SEQUENCE OF 22-37</scope>
    <source>
        <tissue>Venom</tissue>
    </source>
</reference>
<reference key="4">
    <citation type="journal article" date="2001" name="J. Biol. Chem.">
        <title>'Weak toxin' from Naja kaouthia is a nontoxic antagonist of alpha-7 and muscle-type nicotinic acetylcholine receptors.</title>
        <authorList>
            <person name="Utkin Y.N."/>
            <person name="Kukhtina V.V."/>
            <person name="Kryukova E.V."/>
            <person name="Chiodini F."/>
            <person name="Bertrand D."/>
            <person name="Methfessel C."/>
            <person name="Tsetlin V.I."/>
        </authorList>
    </citation>
    <scope>FUNCTION</scope>
    <scope>MASS SPECTROMETRY</scope>
</reference>
<reference key="5">
    <citation type="journal article" date="2005" name="Toxicon">
        <title>Weak neurotoxin from Naja kaouthia cobra venom affects haemodynamic regulation by acting on acetylcholine receptors.</title>
        <authorList>
            <person name="Ogay A.Y."/>
            <person name="Rzhevsky D.I."/>
            <person name="Murashev A.N."/>
            <person name="Tsetlin V.I."/>
            <person name="Utkin Y.N."/>
        </authorList>
    </citation>
    <scope>FUNCTION</scope>
</reference>
<reference key="6">
    <citation type="journal article" date="2007" name="Basic Clin. Pharmacol. Toxicol.">
        <title>Behavioural effects in mice and intoxication symptomatology of weak neurotoxin from cobra Naja kaouthia.</title>
        <authorList>
            <person name="Mordvintsev D.Y."/>
            <person name="Rodionov D.I."/>
            <person name="Makarova M.V."/>
            <person name="Kamensky A.A."/>
            <person name="Levitskaya N.G."/>
            <person name="Ogay A.Y."/>
            <person name="Rzhevsky D.I."/>
            <person name="Murashev A.N."/>
            <person name="Tsetlin V.I."/>
            <person name="Utkin Y.N."/>
        </authorList>
    </citation>
    <scope>FUNCTION</scope>
    <scope>BIOASSAY</scope>
    <scope>MASS SPECTROMETRY</scope>
    <source>
        <tissue>Venom</tissue>
    </source>
</reference>
<reference key="7">
    <citation type="journal article" date="2009" name="FEBS J.">
        <title>Weak toxin WTX from Naja kaouthia cobra venom interacts with both nicotinic and muscarinic acetylcholine receptors.</title>
        <authorList>
            <person name="Mordvintsev D.Y."/>
            <person name="Polyak Y.L."/>
            <person name="Rodionov D.I."/>
            <person name="Jakubik J."/>
            <person name="Dolezal V."/>
            <person name="Karlsson E."/>
            <person name="Tsetlin V.I."/>
            <person name="Utkin Y.N."/>
        </authorList>
    </citation>
    <scope>FUNCTION</scope>
</reference>
<reference key="8">
    <citation type="journal article" date="2015" name="J. Biol. Chem.">
        <title>Neurotoxins from snake venoms and alpha-conotoxin ImI inhibit functionally active ionotropic gamma-aminobutyric acid (GABA) receptors.</title>
        <authorList>
            <person name="Kudryavtsev D.S."/>
            <person name="Shelukhina I.V."/>
            <person name="Son L.V."/>
            <person name="Ojomoko L.O."/>
            <person name="Kryukova E.V."/>
            <person name="Lyukmanova E.N."/>
            <person name="Zhmak M.N."/>
            <person name="Dolgikh D.A."/>
            <person name="Ivanov I.A."/>
            <person name="Kasheverov I.E."/>
            <person name="Starkov V.G."/>
            <person name="Ramerstorfer J."/>
            <person name="Sieghart W."/>
            <person name="Tsetlin V.I."/>
            <person name="Utkin Y.N."/>
        </authorList>
    </citation>
    <scope>FUNCTION</scope>
    <source>
        <tissue>Venom</tissue>
    </source>
</reference>
<reference key="9">
    <citation type="journal article" date="2016" name="Toxicon">
        <title>Central loop of non-conventional toxin WTX from Naja kaouthia is important for interaction with nicotinic acetylcholine receptors.</title>
        <authorList>
            <person name="Lyukmanova E.N."/>
            <person name="Shulepko M.A."/>
            <person name="Shenkarev Z.O."/>
            <person name="Kasheverov I.E."/>
            <person name="Chugunov A.O."/>
            <person name="Kulbatskii D.S."/>
            <person name="Myshkin M.Y."/>
            <person name="Utkin Y.N."/>
            <person name="Efremov R.G."/>
            <person name="Tsetlin V.I."/>
            <person name="Arseniev A.S."/>
            <person name="Kirpichnikov M.P."/>
            <person name="Dolgikh D.A."/>
        </authorList>
    </citation>
    <scope>FUNCTION</scope>
    <scope>MUTAGENESIS OF CYS-27; PRO-28; CYS-32; ARG-52; ARG-53; PRO-54; TRP-57 AND ARG-58</scope>
    <scope>RECOMBINANT EXPRESSION</scope>
    <scope>3D-STRUCTURE MODELING IN COMPLEX WITH ALPHA-7/CHRNA7 NICOTINIC ACETYLCHOLINE RECEPTOR</scope>
</reference>
<reference key="10">
    <citation type="journal article" date="2015" name="J. Biol. Chem.">
        <title>Structural insight into specificity of interactions between nonconventional three-finger weak toxin from Naja kaouthia (WTX) and muscarinic acetylcholine receptors.</title>
        <authorList>
            <person name="Lyukmanova E.N."/>
            <person name="Shenkarev Z.O."/>
            <person name="Shulepko M.A."/>
            <person name="Paramonov A.S."/>
            <person name="Chugunov A.O."/>
            <person name="Janickova H."/>
            <person name="Dolejsi E."/>
            <person name="Dolezal V."/>
            <person name="Utkin Y.N."/>
            <person name="Tsetlin V.I."/>
            <person name="Arseniev A.S."/>
            <person name="Efremov R.G."/>
            <person name="Dolgikh D.A."/>
            <person name="Kirpichnikov M.P."/>
        </authorList>
    </citation>
    <scope>STRUCTURE BY NMR OF 22-86 OF MUTANT ALA-54</scope>
    <scope>DISULFIDE BOND</scope>
    <scope>RECOMBINANT EXPRESSION</scope>
    <scope>3D-STRUCTURE MODELING IN COMPLEX WITH M1 AND M3 MUSCARINIC ACETYLCHOLINE RECEPTORS</scope>
</reference>
<protein>
    <recommendedName>
        <fullName evidence="9">Tryptophan-containing weak neurotoxin</fullName>
        <shortName evidence="10 11 12">WTX</shortName>
    </recommendedName>
</protein>
<organism>
    <name type="scientific">Naja kaouthia</name>
    <name type="common">Monocled cobra</name>
    <name type="synonym">Naja siamensis</name>
    <dbReference type="NCBI Taxonomy" id="8649"/>
    <lineage>
        <taxon>Eukaryota</taxon>
        <taxon>Metazoa</taxon>
        <taxon>Chordata</taxon>
        <taxon>Craniata</taxon>
        <taxon>Vertebrata</taxon>
        <taxon>Euteleostomi</taxon>
        <taxon>Lepidosauria</taxon>
        <taxon>Squamata</taxon>
        <taxon>Bifurcata</taxon>
        <taxon>Unidentata</taxon>
        <taxon>Episquamata</taxon>
        <taxon>Toxicofera</taxon>
        <taxon>Serpentes</taxon>
        <taxon>Colubroidea</taxon>
        <taxon>Elapidae</taxon>
        <taxon>Elapinae</taxon>
        <taxon>Naja</taxon>
    </lineage>
</organism>